<keyword id="KW-0963">Cytoplasm</keyword>
<keyword id="KW-0539">Nucleus</keyword>
<keyword id="KW-1185">Reference proteome</keyword>
<gene>
    <name type="primary">ints9</name>
    <name type="ORF">v1g168629</name>
</gene>
<name>INT9_NEMVE</name>
<accession>A7SBF0</accession>
<dbReference type="EMBL" id="DS469615">
    <property type="protein sequence ID" value="EDO39014.1"/>
    <property type="molecule type" value="Genomic_DNA"/>
</dbReference>
<dbReference type="RefSeq" id="XP_001631077.1">
    <property type="nucleotide sequence ID" value="XM_001631027.1"/>
</dbReference>
<dbReference type="SMR" id="A7SBF0"/>
<dbReference type="FunCoup" id="A7SBF0">
    <property type="interactions" value="733"/>
</dbReference>
<dbReference type="STRING" id="45351.A7SBF0"/>
<dbReference type="EnsemblMetazoa" id="EDO39014">
    <property type="protein sequence ID" value="EDO39014"/>
    <property type="gene ID" value="NEMVEDRAFT_v1g168629"/>
</dbReference>
<dbReference type="GeneID" id="5510608"/>
<dbReference type="KEGG" id="nve:5510608"/>
<dbReference type="eggNOG" id="KOG1138">
    <property type="taxonomic scope" value="Eukaryota"/>
</dbReference>
<dbReference type="HOGENOM" id="CLU_023159_1_0_1"/>
<dbReference type="InParanoid" id="A7SBF0"/>
<dbReference type="OMA" id="AMKAVHC"/>
<dbReference type="OrthoDB" id="5600060at2759"/>
<dbReference type="PhylomeDB" id="A7SBF0"/>
<dbReference type="Proteomes" id="UP000001593">
    <property type="component" value="Unassembled WGS sequence"/>
</dbReference>
<dbReference type="GO" id="GO:0005737">
    <property type="term" value="C:cytoplasm"/>
    <property type="evidence" value="ECO:0000250"/>
    <property type="project" value="UniProtKB"/>
</dbReference>
<dbReference type="GO" id="GO:0160232">
    <property type="term" value="C:INTAC complex"/>
    <property type="evidence" value="ECO:0000250"/>
    <property type="project" value="UniProtKB"/>
</dbReference>
<dbReference type="GO" id="GO:0032039">
    <property type="term" value="C:integrator complex"/>
    <property type="evidence" value="ECO:0000250"/>
    <property type="project" value="UniProtKB"/>
</dbReference>
<dbReference type="GO" id="GO:0005634">
    <property type="term" value="C:nucleus"/>
    <property type="evidence" value="ECO:0000250"/>
    <property type="project" value="UniProtKB"/>
</dbReference>
<dbReference type="GO" id="GO:0160240">
    <property type="term" value="P:RNA polymerase II transcription initiation surveillance"/>
    <property type="evidence" value="ECO:0000250"/>
    <property type="project" value="UniProtKB"/>
</dbReference>
<dbReference type="GO" id="GO:0034472">
    <property type="term" value="P:snRNA 3'-end processing"/>
    <property type="evidence" value="ECO:0000318"/>
    <property type="project" value="GO_Central"/>
</dbReference>
<dbReference type="CDD" id="cd16294">
    <property type="entry name" value="Int9-like_MBL-fold"/>
    <property type="match status" value="1"/>
</dbReference>
<dbReference type="Gene3D" id="3.40.50.10890">
    <property type="match status" value="1"/>
</dbReference>
<dbReference type="Gene3D" id="3.60.15.10">
    <property type="entry name" value="Ribonuclease Z/Hydroxyacylglutathione hydrolase-like"/>
    <property type="match status" value="1"/>
</dbReference>
<dbReference type="InterPro" id="IPR022712">
    <property type="entry name" value="Beta_Casp"/>
</dbReference>
<dbReference type="InterPro" id="IPR027074">
    <property type="entry name" value="Integrator_9su"/>
</dbReference>
<dbReference type="InterPro" id="IPR048660">
    <property type="entry name" value="IntS9-like_C"/>
</dbReference>
<dbReference type="InterPro" id="IPR001279">
    <property type="entry name" value="Metallo-B-lactamas"/>
</dbReference>
<dbReference type="InterPro" id="IPR036866">
    <property type="entry name" value="RibonucZ/Hydroxyglut_hydro"/>
</dbReference>
<dbReference type="PANTHER" id="PTHR46094">
    <property type="entry name" value="INTEGRATOR COMPLEX SUBUNIT 9"/>
    <property type="match status" value="1"/>
</dbReference>
<dbReference type="PANTHER" id="PTHR46094:SF1">
    <property type="entry name" value="INTEGRATOR COMPLEX SUBUNIT 9"/>
    <property type="match status" value="1"/>
</dbReference>
<dbReference type="Pfam" id="PF10996">
    <property type="entry name" value="Beta-Casp"/>
    <property type="match status" value="1"/>
</dbReference>
<dbReference type="Pfam" id="PF21382">
    <property type="entry name" value="IntS9_C"/>
    <property type="match status" value="1"/>
</dbReference>
<dbReference type="Pfam" id="PF16661">
    <property type="entry name" value="Lactamase_B_6"/>
    <property type="match status" value="1"/>
</dbReference>
<dbReference type="SMART" id="SM01027">
    <property type="entry name" value="Beta-Casp"/>
    <property type="match status" value="1"/>
</dbReference>
<dbReference type="SUPFAM" id="SSF56281">
    <property type="entry name" value="Metallo-hydrolase/oxidoreductase"/>
    <property type="match status" value="1"/>
</dbReference>
<sequence>MKLYCVGHSVSSPCLVLQFKQTNIMLDCGLDMSTVNQFTPLSLVNNEKFSQLKSWSSRELQEIEGFTAQNNLKEAGGRLFIDAEPEVCPPETGLIDFSMVDVILISNYHHMLALPFITEYSGFNGKIYATEPTIQIGRDLMLELVTFAERVPKRRNGNMWKNDNVIRCLPAPLNELANVKSWRVLYSKHDVKACISKIQAVSYSEKLDLCGILQLSAHSSGFCLGSSNWMLESEYEKISYLSPSSSFTTHPLPLNQTVLKNSDVLIITGVTEAPIDNPDAMLGEFCTHLASTLRAGGNVLVPCYPSGVLYDLFECLYTYLDNAKLGMVPIYFISPVADSSLAYSNIYGEWLCQSKQTKVYLPEPPFPHAELLKEARLKVFSNLHNGFSSSFKTPCVVFTGHPSLRYGDAVHFMEIWGKSGNNTVIFTEPDFPYLEALAPYQPLAMKTCYCPIDPRLNFAQANKLLKELQPRHLVMPESYSRPPVIHPHRTDLTIEDPGCSLTTFNHLDVAALPISRSFEKVVIANELSSCLHPQHVRPGVAVATLTGTLVTKDNKYTLQPLEFLVEPKAGSEGGDSSTNKGQLSRHLWGTVQLDDFVRSLKKRGITDVNVESSGGEHTIHLPNDDAMILLDRGSTHIITHGNEELRIRIRDALLECVPQF</sequence>
<comment type="function">
    <text evidence="1">Component of the integrator complex, a multiprotein complex that terminates RNA polymerase II (Pol II) transcription in the promoter-proximal region of genes. The integrator complex provides a quality checkpoint during transcription elongation by driving premature transcription termination of transcripts that are unfavorably configured for transcriptional elongation: the complex terminates transcription by (1) catalyzing dephosphorylation of the C-terminal domain (CTD) of Pol II subunit polr2a, (2) degrading the exiting nascent RNA transcript via endonuclease activity and (3) promoting the release of Pol II from bound DNA. The integrator complex is also involved in terminating the synthesis of non-coding Pol II transcripts, such as enhancer RNAs (eRNAs), small nuclear RNAs (snRNAs), telomerase RNAs and long non-coding RNAs (lncRNAs).</text>
</comment>
<comment type="subunit">
    <text evidence="1">Component of the Integrator complex. The core complex associates with protein phosphatase 2A subunits, to form the Integrator-PP2A (INTAC) complex.</text>
</comment>
<comment type="subcellular location">
    <subcellularLocation>
        <location evidence="1">Nucleus</location>
    </subcellularLocation>
    <subcellularLocation>
        <location evidence="1">Cytoplasm</location>
    </subcellularLocation>
</comment>
<comment type="similarity">
    <text evidence="2">Belongs to the metallo-beta-lactamase superfamily. RNA-metabolizing metallo-beta-lactamase-like family. INTS9 subfamily.</text>
</comment>
<organism>
    <name type="scientific">Nematostella vectensis</name>
    <name type="common">Starlet sea anemone</name>
    <dbReference type="NCBI Taxonomy" id="45351"/>
    <lineage>
        <taxon>Eukaryota</taxon>
        <taxon>Metazoa</taxon>
        <taxon>Cnidaria</taxon>
        <taxon>Anthozoa</taxon>
        <taxon>Hexacorallia</taxon>
        <taxon>Actiniaria</taxon>
        <taxon>Edwardsiidae</taxon>
        <taxon>Nematostella</taxon>
    </lineage>
</organism>
<reference key="1">
    <citation type="journal article" date="2007" name="Science">
        <title>Sea anemone genome reveals ancestral eumetazoan gene repertoire and genomic organization.</title>
        <authorList>
            <person name="Putnam N.H."/>
            <person name="Srivastava M."/>
            <person name="Hellsten U."/>
            <person name="Dirks B."/>
            <person name="Chapman J."/>
            <person name="Salamov A."/>
            <person name="Terry A."/>
            <person name="Shapiro H."/>
            <person name="Lindquist E."/>
            <person name="Kapitonov V.V."/>
            <person name="Jurka J."/>
            <person name="Genikhovich G."/>
            <person name="Grigoriev I.V."/>
            <person name="Lucas S.M."/>
            <person name="Steele R.E."/>
            <person name="Finnerty J.R."/>
            <person name="Technau U."/>
            <person name="Martindale M.Q."/>
            <person name="Rokhsar D.S."/>
        </authorList>
    </citation>
    <scope>NUCLEOTIDE SEQUENCE [LARGE SCALE GENOMIC DNA]</scope>
    <source>
        <strain>CH2 X CH6</strain>
    </source>
</reference>
<protein>
    <recommendedName>
        <fullName>Integrator complex subunit 9 homolog</fullName>
    </recommendedName>
</protein>
<evidence type="ECO:0000250" key="1">
    <source>
        <dbReference type="UniProtKB" id="Q9NV88"/>
    </source>
</evidence>
<evidence type="ECO:0000305" key="2"/>
<proteinExistence type="inferred from homology"/>
<feature type="chain" id="PRO_0000342372" description="Integrator complex subunit 9 homolog">
    <location>
        <begin position="1"/>
        <end position="660"/>
    </location>
</feature>